<dbReference type="EC" id="2.1.2.3" evidence="1"/>
<dbReference type="EC" id="3.5.4.10" evidence="1"/>
<dbReference type="EMBL" id="CP000325">
    <property type="protein sequence ID" value="ABL06644.1"/>
    <property type="molecule type" value="Genomic_DNA"/>
</dbReference>
<dbReference type="RefSeq" id="WP_011742239.1">
    <property type="nucleotide sequence ID" value="NC_008611.1"/>
</dbReference>
<dbReference type="SMR" id="A0PWC5"/>
<dbReference type="KEGG" id="mul:MUL_4712"/>
<dbReference type="eggNOG" id="COG0138">
    <property type="taxonomic scope" value="Bacteria"/>
</dbReference>
<dbReference type="HOGENOM" id="CLU_016316_5_2_11"/>
<dbReference type="UniPathway" id="UPA00074">
    <property type="reaction ID" value="UER00133"/>
</dbReference>
<dbReference type="UniPathway" id="UPA00074">
    <property type="reaction ID" value="UER00135"/>
</dbReference>
<dbReference type="Proteomes" id="UP000000765">
    <property type="component" value="Chromosome"/>
</dbReference>
<dbReference type="GO" id="GO:0005829">
    <property type="term" value="C:cytosol"/>
    <property type="evidence" value="ECO:0007669"/>
    <property type="project" value="TreeGrafter"/>
</dbReference>
<dbReference type="GO" id="GO:0003937">
    <property type="term" value="F:IMP cyclohydrolase activity"/>
    <property type="evidence" value="ECO:0007669"/>
    <property type="project" value="UniProtKB-UniRule"/>
</dbReference>
<dbReference type="GO" id="GO:0004643">
    <property type="term" value="F:phosphoribosylaminoimidazolecarboxamide formyltransferase activity"/>
    <property type="evidence" value="ECO:0007669"/>
    <property type="project" value="UniProtKB-UniRule"/>
</dbReference>
<dbReference type="GO" id="GO:0006189">
    <property type="term" value="P:'de novo' IMP biosynthetic process"/>
    <property type="evidence" value="ECO:0007669"/>
    <property type="project" value="UniProtKB-UniRule"/>
</dbReference>
<dbReference type="CDD" id="cd01421">
    <property type="entry name" value="IMPCH"/>
    <property type="match status" value="1"/>
</dbReference>
<dbReference type="FunFam" id="3.40.140.20:FF:000001">
    <property type="entry name" value="Bifunctional purine biosynthesis protein PurH"/>
    <property type="match status" value="1"/>
</dbReference>
<dbReference type="FunFam" id="3.40.140.20:FF:000002">
    <property type="entry name" value="Bifunctional purine biosynthesis protein PurH"/>
    <property type="match status" value="1"/>
</dbReference>
<dbReference type="FunFam" id="3.40.50.1380:FF:000001">
    <property type="entry name" value="Bifunctional purine biosynthesis protein PurH"/>
    <property type="match status" value="1"/>
</dbReference>
<dbReference type="Gene3D" id="3.40.140.20">
    <property type="match status" value="2"/>
</dbReference>
<dbReference type="Gene3D" id="3.40.50.1380">
    <property type="entry name" value="Methylglyoxal synthase-like domain"/>
    <property type="match status" value="1"/>
</dbReference>
<dbReference type="HAMAP" id="MF_00139">
    <property type="entry name" value="PurH"/>
    <property type="match status" value="1"/>
</dbReference>
<dbReference type="InterPro" id="IPR024051">
    <property type="entry name" value="AICAR_Tfase_dup_dom_sf"/>
</dbReference>
<dbReference type="InterPro" id="IPR016193">
    <property type="entry name" value="Cytidine_deaminase-like"/>
</dbReference>
<dbReference type="InterPro" id="IPR011607">
    <property type="entry name" value="MGS-like_dom"/>
</dbReference>
<dbReference type="InterPro" id="IPR036914">
    <property type="entry name" value="MGS-like_dom_sf"/>
</dbReference>
<dbReference type="InterPro" id="IPR002695">
    <property type="entry name" value="PurH-like"/>
</dbReference>
<dbReference type="NCBIfam" id="NF002049">
    <property type="entry name" value="PRK00881.1"/>
    <property type="match status" value="1"/>
</dbReference>
<dbReference type="NCBIfam" id="TIGR00355">
    <property type="entry name" value="purH"/>
    <property type="match status" value="1"/>
</dbReference>
<dbReference type="PANTHER" id="PTHR11692:SF0">
    <property type="entry name" value="BIFUNCTIONAL PURINE BIOSYNTHESIS PROTEIN ATIC"/>
    <property type="match status" value="1"/>
</dbReference>
<dbReference type="PANTHER" id="PTHR11692">
    <property type="entry name" value="BIFUNCTIONAL PURINE BIOSYNTHESIS PROTEIN PURH"/>
    <property type="match status" value="1"/>
</dbReference>
<dbReference type="Pfam" id="PF01808">
    <property type="entry name" value="AICARFT_IMPCHas"/>
    <property type="match status" value="1"/>
</dbReference>
<dbReference type="Pfam" id="PF02142">
    <property type="entry name" value="MGS"/>
    <property type="match status" value="1"/>
</dbReference>
<dbReference type="PIRSF" id="PIRSF000414">
    <property type="entry name" value="AICARFT_IMPCHas"/>
    <property type="match status" value="1"/>
</dbReference>
<dbReference type="SMART" id="SM00798">
    <property type="entry name" value="AICARFT_IMPCHas"/>
    <property type="match status" value="1"/>
</dbReference>
<dbReference type="SMART" id="SM00851">
    <property type="entry name" value="MGS"/>
    <property type="match status" value="1"/>
</dbReference>
<dbReference type="SUPFAM" id="SSF53927">
    <property type="entry name" value="Cytidine deaminase-like"/>
    <property type="match status" value="1"/>
</dbReference>
<dbReference type="SUPFAM" id="SSF52335">
    <property type="entry name" value="Methylglyoxal synthase-like"/>
    <property type="match status" value="1"/>
</dbReference>
<dbReference type="PROSITE" id="PS51855">
    <property type="entry name" value="MGS"/>
    <property type="match status" value="1"/>
</dbReference>
<keyword id="KW-0378">Hydrolase</keyword>
<keyword id="KW-0511">Multifunctional enzyme</keyword>
<keyword id="KW-0658">Purine biosynthesis</keyword>
<keyword id="KW-0808">Transferase</keyword>
<organism>
    <name type="scientific">Mycobacterium ulcerans (strain Agy99)</name>
    <dbReference type="NCBI Taxonomy" id="362242"/>
    <lineage>
        <taxon>Bacteria</taxon>
        <taxon>Bacillati</taxon>
        <taxon>Actinomycetota</taxon>
        <taxon>Actinomycetes</taxon>
        <taxon>Mycobacteriales</taxon>
        <taxon>Mycobacteriaceae</taxon>
        <taxon>Mycobacterium</taxon>
        <taxon>Mycobacterium ulcerans group</taxon>
    </lineage>
</organism>
<reference key="1">
    <citation type="journal article" date="2007" name="Genome Res.">
        <title>Reductive evolution and niche adaptation inferred from the genome of Mycobacterium ulcerans, the causative agent of Buruli ulcer.</title>
        <authorList>
            <person name="Stinear T.P."/>
            <person name="Seemann T."/>
            <person name="Pidot S."/>
            <person name="Frigui W."/>
            <person name="Reysset G."/>
            <person name="Garnier T."/>
            <person name="Meurice G."/>
            <person name="Simon D."/>
            <person name="Bouchier C."/>
            <person name="Ma L."/>
            <person name="Tichit M."/>
            <person name="Porter J.L."/>
            <person name="Ryan J."/>
            <person name="Johnson P.D.R."/>
            <person name="Davies J.K."/>
            <person name="Jenkin G.A."/>
            <person name="Small P.L.C."/>
            <person name="Jones L.M."/>
            <person name="Tekaia F."/>
            <person name="Laval F."/>
            <person name="Daffe M."/>
            <person name="Parkhill J."/>
            <person name="Cole S.T."/>
        </authorList>
    </citation>
    <scope>NUCLEOTIDE SEQUENCE [LARGE SCALE GENOMIC DNA]</scope>
    <source>
        <strain>Agy99</strain>
    </source>
</reference>
<name>PUR9_MYCUA</name>
<feature type="chain" id="PRO_1000018915" description="Bifunctional purine biosynthesis protein PurH">
    <location>
        <begin position="1"/>
        <end position="523"/>
    </location>
</feature>
<feature type="domain" description="MGS-like" evidence="2">
    <location>
        <begin position="4"/>
        <end position="152"/>
    </location>
</feature>
<accession>A0PWC5</accession>
<proteinExistence type="inferred from homology"/>
<comment type="catalytic activity">
    <reaction evidence="1">
        <text>(6R)-10-formyltetrahydrofolate + 5-amino-1-(5-phospho-beta-D-ribosyl)imidazole-4-carboxamide = 5-formamido-1-(5-phospho-D-ribosyl)imidazole-4-carboxamide + (6S)-5,6,7,8-tetrahydrofolate</text>
        <dbReference type="Rhea" id="RHEA:22192"/>
        <dbReference type="ChEBI" id="CHEBI:57453"/>
        <dbReference type="ChEBI" id="CHEBI:58467"/>
        <dbReference type="ChEBI" id="CHEBI:58475"/>
        <dbReference type="ChEBI" id="CHEBI:195366"/>
        <dbReference type="EC" id="2.1.2.3"/>
    </reaction>
</comment>
<comment type="catalytic activity">
    <reaction evidence="1">
        <text>IMP + H2O = 5-formamido-1-(5-phospho-D-ribosyl)imidazole-4-carboxamide</text>
        <dbReference type="Rhea" id="RHEA:18445"/>
        <dbReference type="ChEBI" id="CHEBI:15377"/>
        <dbReference type="ChEBI" id="CHEBI:58053"/>
        <dbReference type="ChEBI" id="CHEBI:58467"/>
        <dbReference type="EC" id="3.5.4.10"/>
    </reaction>
</comment>
<comment type="pathway">
    <text evidence="1">Purine metabolism; IMP biosynthesis via de novo pathway; 5-formamido-1-(5-phospho-D-ribosyl)imidazole-4-carboxamide from 5-amino-1-(5-phospho-D-ribosyl)imidazole-4-carboxamide (10-formyl THF route): step 1/1.</text>
</comment>
<comment type="pathway">
    <text evidence="1">Purine metabolism; IMP biosynthesis via de novo pathway; IMP from 5-formamido-1-(5-phospho-D-ribosyl)imidazole-4-carboxamide: step 1/1.</text>
</comment>
<comment type="domain">
    <text evidence="1">The IMP cyclohydrolase activity resides in the N-terminal region.</text>
</comment>
<comment type="similarity">
    <text evidence="1">Belongs to the PurH family.</text>
</comment>
<sequence length="523" mass="55581">MSTDHIRRPIRRALISVYDKTGLVDLAQGLTAAGVEIVSTGSTAKTIASKGIPVTRVEELTGFPEVLDGRVKTLHPRVHAGLLADLRNPEHEAALAELGVEAFELVVVNLYPFSQTVESGASVDECVEQIDIGGPSMVRAAAKNHPSVAVVTDPQGYDGVLAAVRSGGFTFAERKKLASLAFQHTAEYDIAVASWMQSTVAPEQPETDFPRWFGRNWRRQAMLRYGENPHQQAALYADPGAWPGLAQAEQLHGKEMSYNNFTDADAAWRAAFDHEQKCVAIIKHANPCGIAISEVSVADAHRKAHACDPLSAYGGVIACNTEVSPEMAEYVSTIFTEVIVAPAYAPAALDQLTKKKNIRVLVASEPQDGGAELRPISGGLLMQQRDQLDAAGDNPANWILATGSPADPATLTDLVFAWRSCRAVKSNAIVIVADGATIGVGMGQVNRVDAARLAVERGGERVNGAVAASDAFFPFPDGLETLTAAGVKAIVHPGGSVRDEEVTAAAAKAGITLYLTGSRHFVH</sequence>
<gene>
    <name evidence="1" type="primary">purH</name>
    <name type="ordered locus">MUL_4712</name>
</gene>
<protein>
    <recommendedName>
        <fullName evidence="1">Bifunctional purine biosynthesis protein PurH</fullName>
    </recommendedName>
    <domain>
        <recommendedName>
            <fullName evidence="1">Phosphoribosylaminoimidazolecarboxamide formyltransferase</fullName>
            <ecNumber evidence="1">2.1.2.3</ecNumber>
        </recommendedName>
        <alternativeName>
            <fullName evidence="1">AICAR transformylase</fullName>
        </alternativeName>
    </domain>
    <domain>
        <recommendedName>
            <fullName evidence="1">IMP cyclohydrolase</fullName>
            <ecNumber evidence="1">3.5.4.10</ecNumber>
        </recommendedName>
        <alternativeName>
            <fullName evidence="1">ATIC</fullName>
        </alternativeName>
        <alternativeName>
            <fullName evidence="1">IMP synthase</fullName>
        </alternativeName>
        <alternativeName>
            <fullName evidence="1">Inosinicase</fullName>
        </alternativeName>
    </domain>
</protein>
<evidence type="ECO:0000255" key="1">
    <source>
        <dbReference type="HAMAP-Rule" id="MF_00139"/>
    </source>
</evidence>
<evidence type="ECO:0000255" key="2">
    <source>
        <dbReference type="PROSITE-ProRule" id="PRU01202"/>
    </source>
</evidence>